<gene>
    <name type="primary">Cyp4e5</name>
</gene>
<comment type="function">
    <text>Probably involved in steroid hormones biosynthesis.</text>
</comment>
<comment type="cofactor">
    <cofactor evidence="1">
        <name>heme</name>
        <dbReference type="ChEBI" id="CHEBI:30413"/>
    </cofactor>
</comment>
<comment type="subcellular location">
    <subcellularLocation>
        <location evidence="3">Mitochondrion</location>
    </subcellularLocation>
</comment>
<comment type="similarity">
    <text evidence="3">Belongs to the cytochrome P450 family.</text>
</comment>
<evidence type="ECO:0000250" key="1"/>
<evidence type="ECO:0000255" key="2"/>
<evidence type="ECO:0000305" key="3"/>
<protein>
    <recommendedName>
        <fullName>Cytochrome P450 4e5, mitochondrial</fullName>
        <ecNumber>1.14.-.-</ecNumber>
    </recommendedName>
    <alternativeName>
        <fullName>CYPIVE5</fullName>
    </alternativeName>
</protein>
<reference key="1">
    <citation type="journal article" date="1997" name="Insect Biochem. Mol. Biol.">
        <title>Isolation and sequence analysis of cytochrome P450 12B1: the first mitochondrial insect P450 with homology to 1 alpha,25 dihydroxy-D3 24-hydroxylase.</title>
        <authorList>
            <person name="Danielson P.B."/>
            <person name="Fogleman J.C."/>
        </authorList>
    </citation>
    <scope>NUCLEOTIDE SEQUENCE [MRNA]</scope>
</reference>
<organism>
    <name type="scientific">Drosophila mettleri</name>
    <name type="common">Fruit fly</name>
    <dbReference type="NCBI Taxonomy" id="7228"/>
    <lineage>
        <taxon>Eukaryota</taxon>
        <taxon>Metazoa</taxon>
        <taxon>Ecdysozoa</taxon>
        <taxon>Arthropoda</taxon>
        <taxon>Hexapoda</taxon>
        <taxon>Insecta</taxon>
        <taxon>Pterygota</taxon>
        <taxon>Neoptera</taxon>
        <taxon>Endopterygota</taxon>
        <taxon>Diptera</taxon>
        <taxon>Brachycera</taxon>
        <taxon>Muscomorpha</taxon>
        <taxon>Ephydroidea</taxon>
        <taxon>Drosophilidae</taxon>
        <taxon>Drosophila</taxon>
    </lineage>
</organism>
<feature type="transit peptide" description="Mitochondrion" evidence="1">
    <location>
        <begin position="1"/>
        <end status="unknown"/>
    </location>
</feature>
<feature type="chain" id="PRO_0000003581" description="Cytochrome P450 4e5, mitochondrial">
    <location>
        <begin status="unknown"/>
        <end position="522"/>
    </location>
</feature>
<feature type="binding site" description="covalent" evidence="1">
    <location>
        <position position="307"/>
    </location>
    <ligand>
        <name>heme</name>
        <dbReference type="ChEBI" id="CHEBI:30413"/>
    </ligand>
</feature>
<feature type="binding site" description="axial binding residue" evidence="2">
    <location>
        <position position="443"/>
    </location>
    <ligand>
        <name>heme</name>
        <dbReference type="ChEBI" id="CHEBI:30413"/>
    </ligand>
    <ligandPart>
        <name>Fe</name>
        <dbReference type="ChEBI" id="CHEBI:18248"/>
    </ligandPart>
</feature>
<proteinExistence type="evidence at transcript level"/>
<name>CP4E5_DROMT</name>
<accession>O44221</accession>
<keyword id="KW-0349">Heme</keyword>
<keyword id="KW-0408">Iron</keyword>
<keyword id="KW-0479">Metal-binding</keyword>
<keyword id="KW-0496">Mitochondrion</keyword>
<keyword id="KW-0503">Monooxygenase</keyword>
<keyword id="KW-0560">Oxidoreductase</keyword>
<keyword id="KW-0809">Transit peptide</keyword>
<sequence length="522" mass="60609">MWFIVYILLALPIMLFVFLSCEWPKRNDAEQIEWSSGVPFLGNAHQMGKTPAEILNTFFEFWHKYNKDNFRIWIGYYANILVSNPKHLEVIMNSTTLIEKLDIYDMLHPWLGEGLLTSKGSKWHKHRKMITPTFHFNILQDFHQVMNENSAKFIKRLKEVSAGDNIIDFQDETHYLTLDAICDTAMGVTINAIEKRDTVDVVKAFKDMCHIINMRAFRPLQRSDFLYRFSPEYATYAKTLKTLKDFTNDIIAKRIKVHRTAAAKTNQEGSEFSRKKMLPDTLLSATIDGRPLNQQEIYEEVSTFMFEGHDTTTSGVAFAGYILSRFPEEQRKLYEEQQAVMGNELNRDATFQEISAMKYLDLFIKEAQRVYPSVPFIGRYTDKDYNIHGTIMPKGTTLNLGIIVLGYDDRVFEEPHRFYPERFEKQKPGPFEYVPFSAGPRNCIGQKFALLELKTVISKLVRTFEVLPAVDELVSKDGNLNTYVGLPKEEKERKERMGYKYDPILSAVLTLKSENGLHLRLR</sequence>
<dbReference type="EC" id="1.14.-.-"/>
<dbReference type="EMBL" id="U78486">
    <property type="protein sequence ID" value="AAC27534.1"/>
    <property type="molecule type" value="mRNA"/>
</dbReference>
<dbReference type="SMR" id="O44221"/>
<dbReference type="GO" id="GO:0005739">
    <property type="term" value="C:mitochondrion"/>
    <property type="evidence" value="ECO:0007669"/>
    <property type="project" value="UniProtKB-SubCell"/>
</dbReference>
<dbReference type="GO" id="GO:0020037">
    <property type="term" value="F:heme binding"/>
    <property type="evidence" value="ECO:0007669"/>
    <property type="project" value="InterPro"/>
</dbReference>
<dbReference type="GO" id="GO:0005506">
    <property type="term" value="F:iron ion binding"/>
    <property type="evidence" value="ECO:0007669"/>
    <property type="project" value="InterPro"/>
</dbReference>
<dbReference type="GO" id="GO:0004497">
    <property type="term" value="F:monooxygenase activity"/>
    <property type="evidence" value="ECO:0007669"/>
    <property type="project" value="UniProtKB-KW"/>
</dbReference>
<dbReference type="GO" id="GO:0016705">
    <property type="term" value="F:oxidoreductase activity, acting on paired donors, with incorporation or reduction of molecular oxygen"/>
    <property type="evidence" value="ECO:0007669"/>
    <property type="project" value="InterPro"/>
</dbReference>
<dbReference type="CDD" id="cd20628">
    <property type="entry name" value="CYP4"/>
    <property type="match status" value="1"/>
</dbReference>
<dbReference type="Gene3D" id="1.10.630.10">
    <property type="entry name" value="Cytochrome P450"/>
    <property type="match status" value="1"/>
</dbReference>
<dbReference type="InterPro" id="IPR001128">
    <property type="entry name" value="Cyt_P450"/>
</dbReference>
<dbReference type="InterPro" id="IPR017972">
    <property type="entry name" value="Cyt_P450_CS"/>
</dbReference>
<dbReference type="InterPro" id="IPR002401">
    <property type="entry name" value="Cyt_P450_E_grp-I"/>
</dbReference>
<dbReference type="InterPro" id="IPR036396">
    <property type="entry name" value="Cyt_P450_sf"/>
</dbReference>
<dbReference type="InterPro" id="IPR050196">
    <property type="entry name" value="Cytochrome_P450_Monoox"/>
</dbReference>
<dbReference type="PANTHER" id="PTHR24291:SF203">
    <property type="entry name" value="CYTOCHROME P450 4D1-RELATED"/>
    <property type="match status" value="1"/>
</dbReference>
<dbReference type="PANTHER" id="PTHR24291">
    <property type="entry name" value="CYTOCHROME P450 FAMILY 4"/>
    <property type="match status" value="1"/>
</dbReference>
<dbReference type="Pfam" id="PF00067">
    <property type="entry name" value="p450"/>
    <property type="match status" value="1"/>
</dbReference>
<dbReference type="PRINTS" id="PR00463">
    <property type="entry name" value="EP450I"/>
</dbReference>
<dbReference type="PRINTS" id="PR00385">
    <property type="entry name" value="P450"/>
</dbReference>
<dbReference type="SUPFAM" id="SSF48264">
    <property type="entry name" value="Cytochrome P450"/>
    <property type="match status" value="1"/>
</dbReference>
<dbReference type="PROSITE" id="PS00086">
    <property type="entry name" value="CYTOCHROME_P450"/>
    <property type="match status" value="1"/>
</dbReference>